<proteinExistence type="evidence at protein level"/>
<sequence length="13" mass="1423">DCCWPGRPDCCAP</sequence>
<organism>
    <name type="scientific">Conus figulinus</name>
    <name type="common">Fig cone</name>
    <dbReference type="NCBI Taxonomy" id="101301"/>
    <lineage>
        <taxon>Eukaryota</taxon>
        <taxon>Metazoa</taxon>
        <taxon>Spiralia</taxon>
        <taxon>Lophotrochozoa</taxon>
        <taxon>Mollusca</taxon>
        <taxon>Gastropoda</taxon>
        <taxon>Caenogastropoda</taxon>
        <taxon>Neogastropoda</taxon>
        <taxon>Conoidea</taxon>
        <taxon>Conidae</taxon>
        <taxon>Conus</taxon>
        <taxon>Dendroconus</taxon>
    </lineage>
</organism>
<accession>P0DP12</accession>
<reference key="1">
    <citation type="journal article" date="2015" name="J. Pept. Sci.">
        <title>Novel M-Superfamily and T-Superfamily conotoxins and contryphans from the vermivorous snail Conus figulinus.</title>
        <authorList>
            <person name="Rajesh R.P."/>
        </authorList>
    </citation>
    <scope>PROTEIN SEQUENCE</scope>
    <scope>IDENTIFICATION BY MASS SPECTROMETRY</scope>
    <scope>MASS SPECTROMETRY</scope>
    <scope>SUBCELLULAR LOCATION</scope>
    <source>
        <tissue>Venom</tissue>
    </source>
</reference>
<evidence type="ECO:0000269" key="1">
    <source>
    </source>
</evidence>
<evidence type="ECO:0000303" key="2">
    <source>
    </source>
</evidence>
<evidence type="ECO:0000305" key="3"/>
<evidence type="ECO:0000305" key="4">
    <source>
    </source>
</evidence>
<comment type="function">
    <text evidence="3">May act as a neurotoxin.</text>
</comment>
<comment type="subcellular location">
    <subcellularLocation>
        <location evidence="1">Secreted</location>
    </subcellularLocation>
</comment>
<comment type="tissue specificity">
    <text evidence="4">Expressed by the venom duct.</text>
</comment>
<comment type="domain">
    <text evidence="3">The cysteine framework is V (CC-CC).</text>
</comment>
<comment type="PTM">
    <text evidence="3">Contains 2 disulfide bonds that can be either 'C1-C3, C2-C4' or 'C1-C4, C2-C3', since these disulfide connectivities have been observed for conotoxins with cysteine framework V (for examples, see AC P0DQQ7 and AC P81755).</text>
</comment>
<comment type="mass spectrometry" mass="1417.6" method="Unknown" evidence="1"/>
<comment type="similarity">
    <text evidence="3">Belongs to the conotoxin T superfamily.</text>
</comment>
<keyword id="KW-0903">Direct protein sequencing</keyword>
<keyword id="KW-1015">Disulfide bond</keyword>
<keyword id="KW-0528">Neurotoxin</keyword>
<keyword id="KW-0964">Secreted</keyword>
<keyword id="KW-0800">Toxin</keyword>
<dbReference type="GO" id="GO:0005576">
    <property type="term" value="C:extracellular region"/>
    <property type="evidence" value="ECO:0007669"/>
    <property type="project" value="UniProtKB-SubCell"/>
</dbReference>
<dbReference type="GO" id="GO:0090729">
    <property type="term" value="F:toxin activity"/>
    <property type="evidence" value="ECO:0007669"/>
    <property type="project" value="UniProtKB-KW"/>
</dbReference>
<protein>
    <recommendedName>
        <fullName evidence="2">Conotoxin Fi5a</fullName>
    </recommendedName>
</protein>
<feature type="peptide" id="PRO_0000439623" description="Conotoxin Fi5a" evidence="1">
    <location>
        <begin position="1"/>
        <end position="13"/>
    </location>
</feature>
<name>CM5A_CONFI</name>